<comment type="function">
    <text evidence="1">In eubacteria ppGpp (guanosine 3'-diphosphate 5'-diphosphate) is a mediator of the stringent response that coordinates a variety of cellular activities in response to changes in nutritional abundance. This enzyme catalyzes the degradation of ppGpp into GDP. It may also be capable of catalyzing the synthesis of ppGpp (By similarity).</text>
</comment>
<comment type="catalytic activity">
    <reaction>
        <text>guanosine 3',5'-bis(diphosphate) + H2O = GDP + diphosphate + H(+)</text>
        <dbReference type="Rhea" id="RHEA:14253"/>
        <dbReference type="ChEBI" id="CHEBI:15377"/>
        <dbReference type="ChEBI" id="CHEBI:15378"/>
        <dbReference type="ChEBI" id="CHEBI:33019"/>
        <dbReference type="ChEBI" id="CHEBI:58189"/>
        <dbReference type="ChEBI" id="CHEBI:77828"/>
        <dbReference type="EC" id="3.1.7.2"/>
    </reaction>
</comment>
<comment type="cofactor">
    <cofactor evidence="1">
        <name>Mn(2+)</name>
        <dbReference type="ChEBI" id="CHEBI:29035"/>
    </cofactor>
</comment>
<comment type="pathway">
    <text>Purine metabolism; ppGpp biosynthesis; ppGpp from GDP: step 1/1.</text>
</comment>
<comment type="similarity">
    <text evidence="5">Belongs to the RelA/SpoT family.</text>
</comment>
<name>SPOT_ECO57</name>
<keyword id="KW-0378">Hydrolase</keyword>
<keyword id="KW-0464">Manganese</keyword>
<keyword id="KW-1185">Reference proteome</keyword>
<gene>
    <name type="primary">spoT</name>
    <name type="ordered locus">Z5076</name>
    <name type="ordered locus">ECs4525</name>
</gene>
<reference key="1">
    <citation type="journal article" date="2001" name="Nature">
        <title>Genome sequence of enterohaemorrhagic Escherichia coli O157:H7.</title>
        <authorList>
            <person name="Perna N.T."/>
            <person name="Plunkett G. III"/>
            <person name="Burland V."/>
            <person name="Mau B."/>
            <person name="Glasner J.D."/>
            <person name="Rose D.J."/>
            <person name="Mayhew G.F."/>
            <person name="Evans P.S."/>
            <person name="Gregor J."/>
            <person name="Kirkpatrick H.A."/>
            <person name="Posfai G."/>
            <person name="Hackett J."/>
            <person name="Klink S."/>
            <person name="Boutin A."/>
            <person name="Shao Y."/>
            <person name="Miller L."/>
            <person name="Grotbeck E.J."/>
            <person name="Davis N.W."/>
            <person name="Lim A."/>
            <person name="Dimalanta E.T."/>
            <person name="Potamousis K."/>
            <person name="Apodaca J."/>
            <person name="Anantharaman T.S."/>
            <person name="Lin J."/>
            <person name="Yen G."/>
            <person name="Schwartz D.C."/>
            <person name="Welch R.A."/>
            <person name="Blattner F.R."/>
        </authorList>
    </citation>
    <scope>NUCLEOTIDE SEQUENCE [LARGE SCALE GENOMIC DNA]</scope>
    <source>
        <strain>O157:H7 / EDL933 / ATCC 700927 / EHEC</strain>
    </source>
</reference>
<reference key="2">
    <citation type="journal article" date="2001" name="DNA Res.">
        <title>Complete genome sequence of enterohemorrhagic Escherichia coli O157:H7 and genomic comparison with a laboratory strain K-12.</title>
        <authorList>
            <person name="Hayashi T."/>
            <person name="Makino K."/>
            <person name="Ohnishi M."/>
            <person name="Kurokawa K."/>
            <person name="Ishii K."/>
            <person name="Yokoyama K."/>
            <person name="Han C.-G."/>
            <person name="Ohtsubo E."/>
            <person name="Nakayama K."/>
            <person name="Murata T."/>
            <person name="Tanaka M."/>
            <person name="Tobe T."/>
            <person name="Iida T."/>
            <person name="Takami H."/>
            <person name="Honda T."/>
            <person name="Sasakawa C."/>
            <person name="Ogasawara N."/>
            <person name="Yasunaga T."/>
            <person name="Kuhara S."/>
            <person name="Shiba T."/>
            <person name="Hattori M."/>
            <person name="Shinagawa H."/>
        </authorList>
    </citation>
    <scope>NUCLEOTIDE SEQUENCE [LARGE SCALE GENOMIC DNA]</scope>
    <source>
        <strain>O157:H7 / Sakai / RIMD 0509952 / EHEC</strain>
    </source>
</reference>
<evidence type="ECO:0000250" key="1"/>
<evidence type="ECO:0000255" key="2">
    <source>
        <dbReference type="PROSITE-ProRule" id="PRU01007"/>
    </source>
</evidence>
<evidence type="ECO:0000255" key="3">
    <source>
        <dbReference type="PROSITE-ProRule" id="PRU01175"/>
    </source>
</evidence>
<evidence type="ECO:0000255" key="4">
    <source>
        <dbReference type="PROSITE-ProRule" id="PRU01228"/>
    </source>
</evidence>
<evidence type="ECO:0000305" key="5"/>
<dbReference type="EC" id="3.1.7.2"/>
<dbReference type="EMBL" id="AE005174">
    <property type="protein sequence ID" value="AAG58794.1"/>
    <property type="molecule type" value="Genomic_DNA"/>
</dbReference>
<dbReference type="EMBL" id="BA000007">
    <property type="protein sequence ID" value="BAB37948.1"/>
    <property type="molecule type" value="Genomic_DNA"/>
</dbReference>
<dbReference type="PIR" id="E91194">
    <property type="entry name" value="E91194"/>
</dbReference>
<dbReference type="PIR" id="F86041">
    <property type="entry name" value="F86041"/>
</dbReference>
<dbReference type="RefSeq" id="NP_312552.1">
    <property type="nucleotide sequence ID" value="NC_002695.1"/>
</dbReference>
<dbReference type="RefSeq" id="WP_000280488.1">
    <property type="nucleotide sequence ID" value="NZ_VOAI01000021.1"/>
</dbReference>
<dbReference type="SMR" id="P0AG25"/>
<dbReference type="STRING" id="155864.Z5076"/>
<dbReference type="GeneID" id="915518"/>
<dbReference type="GeneID" id="93778365"/>
<dbReference type="KEGG" id="ece:Z5076"/>
<dbReference type="KEGG" id="ecs:ECs_4525"/>
<dbReference type="PATRIC" id="fig|386585.9.peg.4743"/>
<dbReference type="eggNOG" id="COG0317">
    <property type="taxonomic scope" value="Bacteria"/>
</dbReference>
<dbReference type="HOGENOM" id="CLU_012300_3_0_6"/>
<dbReference type="OMA" id="PIDFAYS"/>
<dbReference type="UniPathway" id="UPA00908">
    <property type="reaction ID" value="UER00886"/>
</dbReference>
<dbReference type="Proteomes" id="UP000000558">
    <property type="component" value="Chromosome"/>
</dbReference>
<dbReference type="Proteomes" id="UP000002519">
    <property type="component" value="Chromosome"/>
</dbReference>
<dbReference type="GO" id="GO:0005886">
    <property type="term" value="C:plasma membrane"/>
    <property type="evidence" value="ECO:0007669"/>
    <property type="project" value="TreeGrafter"/>
</dbReference>
<dbReference type="GO" id="GO:0008728">
    <property type="term" value="F:GTP diphosphokinase activity"/>
    <property type="evidence" value="ECO:0007669"/>
    <property type="project" value="TreeGrafter"/>
</dbReference>
<dbReference type="GO" id="GO:0008893">
    <property type="term" value="F:guanosine-3',5'-bis(diphosphate) 3'-diphosphatase activity"/>
    <property type="evidence" value="ECO:0007669"/>
    <property type="project" value="UniProtKB-EC"/>
</dbReference>
<dbReference type="GO" id="GO:0015970">
    <property type="term" value="P:guanosine tetraphosphate biosynthetic process"/>
    <property type="evidence" value="ECO:0007669"/>
    <property type="project" value="UniProtKB-UniPathway"/>
</dbReference>
<dbReference type="GO" id="GO:0042594">
    <property type="term" value="P:response to starvation"/>
    <property type="evidence" value="ECO:0007669"/>
    <property type="project" value="TreeGrafter"/>
</dbReference>
<dbReference type="CDD" id="cd04876">
    <property type="entry name" value="ACT_RelA-SpoT"/>
    <property type="match status" value="1"/>
</dbReference>
<dbReference type="CDD" id="cd00077">
    <property type="entry name" value="HDc"/>
    <property type="match status" value="1"/>
</dbReference>
<dbReference type="CDD" id="cd05399">
    <property type="entry name" value="NT_Rel-Spo_like"/>
    <property type="match status" value="1"/>
</dbReference>
<dbReference type="CDD" id="cd01668">
    <property type="entry name" value="TGS_RSH"/>
    <property type="match status" value="1"/>
</dbReference>
<dbReference type="FunFam" id="3.30.70.260:FF:000006">
    <property type="entry name" value="(P)ppGpp synthase/hydrolase SpoT"/>
    <property type="match status" value="1"/>
</dbReference>
<dbReference type="FunFam" id="3.10.20.30:FF:000002">
    <property type="entry name" value="GTP pyrophosphokinase (RelA/SpoT)"/>
    <property type="match status" value="1"/>
</dbReference>
<dbReference type="FunFam" id="1.10.3210.10:FF:000001">
    <property type="entry name" value="GTP pyrophosphokinase RelA"/>
    <property type="match status" value="1"/>
</dbReference>
<dbReference type="FunFam" id="3.30.460.10:FF:000001">
    <property type="entry name" value="GTP pyrophosphokinase RelA"/>
    <property type="match status" value="1"/>
</dbReference>
<dbReference type="Gene3D" id="3.10.20.30">
    <property type="match status" value="1"/>
</dbReference>
<dbReference type="Gene3D" id="3.30.70.260">
    <property type="match status" value="1"/>
</dbReference>
<dbReference type="Gene3D" id="3.30.460.10">
    <property type="entry name" value="Beta Polymerase, domain 2"/>
    <property type="match status" value="1"/>
</dbReference>
<dbReference type="Gene3D" id="1.10.3210.10">
    <property type="entry name" value="Hypothetical protein af1432"/>
    <property type="match status" value="1"/>
</dbReference>
<dbReference type="InterPro" id="IPR045865">
    <property type="entry name" value="ACT-like_dom_sf"/>
</dbReference>
<dbReference type="InterPro" id="IPR002912">
    <property type="entry name" value="ACT_dom"/>
</dbReference>
<dbReference type="InterPro" id="IPR012675">
    <property type="entry name" value="Beta-grasp_dom_sf"/>
</dbReference>
<dbReference type="InterPro" id="IPR003607">
    <property type="entry name" value="HD/PDEase_dom"/>
</dbReference>
<dbReference type="InterPro" id="IPR006674">
    <property type="entry name" value="HD_domain"/>
</dbReference>
<dbReference type="InterPro" id="IPR043519">
    <property type="entry name" value="NT_sf"/>
</dbReference>
<dbReference type="InterPro" id="IPR004811">
    <property type="entry name" value="RelA/Spo_fam"/>
</dbReference>
<dbReference type="InterPro" id="IPR045600">
    <property type="entry name" value="RelA/SpoT_AH_RIS"/>
</dbReference>
<dbReference type="InterPro" id="IPR007685">
    <property type="entry name" value="RelA_SpoT"/>
</dbReference>
<dbReference type="InterPro" id="IPR004095">
    <property type="entry name" value="TGS"/>
</dbReference>
<dbReference type="InterPro" id="IPR012676">
    <property type="entry name" value="TGS-like"/>
</dbReference>
<dbReference type="InterPro" id="IPR033655">
    <property type="entry name" value="TGS_RelA/SpoT"/>
</dbReference>
<dbReference type="NCBIfam" id="NF008303">
    <property type="entry name" value="PRK11092.1"/>
    <property type="match status" value="1"/>
</dbReference>
<dbReference type="NCBIfam" id="TIGR00691">
    <property type="entry name" value="spoT_relA"/>
    <property type="match status" value="1"/>
</dbReference>
<dbReference type="PANTHER" id="PTHR21262:SF36">
    <property type="entry name" value="BIFUNCTIONAL (P)PPGPP SYNTHASE_HYDROLASE SPOT"/>
    <property type="match status" value="1"/>
</dbReference>
<dbReference type="PANTHER" id="PTHR21262">
    <property type="entry name" value="GUANOSINE-3',5'-BIS DIPHOSPHATE 3'-PYROPHOSPHOHYDROLASE"/>
    <property type="match status" value="1"/>
</dbReference>
<dbReference type="Pfam" id="PF13291">
    <property type="entry name" value="ACT_4"/>
    <property type="match status" value="1"/>
</dbReference>
<dbReference type="Pfam" id="PF13328">
    <property type="entry name" value="HD_4"/>
    <property type="match status" value="1"/>
</dbReference>
<dbReference type="Pfam" id="PF19296">
    <property type="entry name" value="RelA_AH_RIS"/>
    <property type="match status" value="1"/>
</dbReference>
<dbReference type="Pfam" id="PF04607">
    <property type="entry name" value="RelA_SpoT"/>
    <property type="match status" value="1"/>
</dbReference>
<dbReference type="Pfam" id="PF02824">
    <property type="entry name" value="TGS"/>
    <property type="match status" value="1"/>
</dbReference>
<dbReference type="SMART" id="SM00471">
    <property type="entry name" value="HDc"/>
    <property type="match status" value="1"/>
</dbReference>
<dbReference type="SMART" id="SM00954">
    <property type="entry name" value="RelA_SpoT"/>
    <property type="match status" value="1"/>
</dbReference>
<dbReference type="SUPFAM" id="SSF55021">
    <property type="entry name" value="ACT-like"/>
    <property type="match status" value="1"/>
</dbReference>
<dbReference type="SUPFAM" id="SSF109604">
    <property type="entry name" value="HD-domain/PDEase-like"/>
    <property type="match status" value="1"/>
</dbReference>
<dbReference type="SUPFAM" id="SSF81301">
    <property type="entry name" value="Nucleotidyltransferase"/>
    <property type="match status" value="1"/>
</dbReference>
<dbReference type="SUPFAM" id="SSF81271">
    <property type="entry name" value="TGS-like"/>
    <property type="match status" value="1"/>
</dbReference>
<dbReference type="PROSITE" id="PS51671">
    <property type="entry name" value="ACT"/>
    <property type="match status" value="1"/>
</dbReference>
<dbReference type="PROSITE" id="PS51831">
    <property type="entry name" value="HD"/>
    <property type="match status" value="1"/>
</dbReference>
<dbReference type="PROSITE" id="PS51880">
    <property type="entry name" value="TGS"/>
    <property type="match status" value="1"/>
</dbReference>
<feature type="chain" id="PRO_0000166570" description="Guanosine-3',5'-bis(diphosphate) 3'-pyrophosphohydrolase">
    <location>
        <begin position="1"/>
        <end position="702"/>
    </location>
</feature>
<feature type="domain" description="HD" evidence="3">
    <location>
        <begin position="45"/>
        <end position="144"/>
    </location>
</feature>
<feature type="domain" description="TGS" evidence="4">
    <location>
        <begin position="386"/>
        <end position="447"/>
    </location>
</feature>
<feature type="domain" description="ACT" evidence="2">
    <location>
        <begin position="628"/>
        <end position="702"/>
    </location>
</feature>
<sequence>MYLFESLNQLIQTYLPEDQIKRLRQAYLVARDAHEGQTRSSGEPYITHPVAVACILAEMKLDYETLMAALLHDVIEDTPATYQDMEQLFGKSVAELVEGVSKLDKLKFRDKKEAQAENFRKMIMAMVQDIRVILIKLADRTHNMRTLGSLRPDKRRRIARETLEIYSPLAHRLGIHHIKTELEELGFEALYPNRYRVIKEVVKAARGNRKEMIQKILSEIEGRLQEAGIPCRVSGREKHLYSIYCKMVLKEQRFHSIMDIYAFRVIVNDSDTCYRVLGQMHSLYKPRPGRVKDYIAIPKANGYQSLHTSMIGPHGVPVEVQIRTEDMDQMAEMGVAAHWAYKEHGETSTTAQIRAQRWMQSLLELQQSAGSSFEFIESVKSDLFPDEIYVFTPEGRIVELPAGATPVDFAYAVHTDIGHACVGARVDRQPYPLSQPLTSGQTVEIITAPGARPNAAWLNFVVSSKARAKIRQLLKNLKRDDSVSLGRRLLNHALGGSRKLNEIPQENIQRELDRMKLATLDDLLAEIGLGNAMSVVVAKNLQHGDASIPPATQSHGHLPIKGADGVLITFAKCCRPIPGDPIIAHVSPGKGLVIHHESCRNIRGYQKEPEKFMAVEWDKETAQEFITEIKVEMFNHQGALANLTAAINTTTSNIQSLNTEEKDGRVYSAFIRLTARDRVHLANIMRKIRVMPDVIKVTRNRN</sequence>
<accession>P0AG25</accession>
<accession>P17580</accession>
<protein>
    <recommendedName>
        <fullName>Guanosine-3',5'-bis(diphosphate) 3'-pyrophosphohydrolase</fullName>
        <ecNumber>3.1.7.2</ecNumber>
    </recommendedName>
    <alternativeName>
        <fullName>Penta-phosphate guanosine-3'-pyrophosphohydrolase</fullName>
        <shortName>(ppGpp)ase</shortName>
    </alternativeName>
</protein>
<proteinExistence type="inferred from homology"/>
<organism>
    <name type="scientific">Escherichia coli O157:H7</name>
    <dbReference type="NCBI Taxonomy" id="83334"/>
    <lineage>
        <taxon>Bacteria</taxon>
        <taxon>Pseudomonadati</taxon>
        <taxon>Pseudomonadota</taxon>
        <taxon>Gammaproteobacteria</taxon>
        <taxon>Enterobacterales</taxon>
        <taxon>Enterobacteriaceae</taxon>
        <taxon>Escherichia</taxon>
    </lineage>
</organism>